<protein>
    <recommendedName>
        <fullName evidence="1">3-dehydroquinate dehydratase</fullName>
        <shortName evidence="1">3-dehydroquinase</shortName>
        <ecNumber evidence="1">4.2.1.10</ecNumber>
    </recommendedName>
    <alternativeName>
        <fullName evidence="1">Type I DHQase</fullName>
    </alternativeName>
    <alternativeName>
        <fullName evidence="1">Type I dehydroquinase</fullName>
        <shortName evidence="1">DHQ1</shortName>
    </alternativeName>
</protein>
<gene>
    <name evidence="1" type="primary">aroD</name>
    <name type="ordered locus">EcHS_A1774</name>
</gene>
<organism>
    <name type="scientific">Escherichia coli O9:H4 (strain HS)</name>
    <dbReference type="NCBI Taxonomy" id="331112"/>
    <lineage>
        <taxon>Bacteria</taxon>
        <taxon>Pseudomonadati</taxon>
        <taxon>Pseudomonadota</taxon>
        <taxon>Gammaproteobacteria</taxon>
        <taxon>Enterobacterales</taxon>
        <taxon>Enterobacteriaceae</taxon>
        <taxon>Escherichia</taxon>
    </lineage>
</organism>
<reference key="1">
    <citation type="journal article" date="2008" name="J. Bacteriol.">
        <title>The pangenome structure of Escherichia coli: comparative genomic analysis of E. coli commensal and pathogenic isolates.</title>
        <authorList>
            <person name="Rasko D.A."/>
            <person name="Rosovitz M.J."/>
            <person name="Myers G.S.A."/>
            <person name="Mongodin E.F."/>
            <person name="Fricke W.F."/>
            <person name="Gajer P."/>
            <person name="Crabtree J."/>
            <person name="Sebaihia M."/>
            <person name="Thomson N.R."/>
            <person name="Chaudhuri R."/>
            <person name="Henderson I.R."/>
            <person name="Sperandio V."/>
            <person name="Ravel J."/>
        </authorList>
    </citation>
    <scope>NUCLEOTIDE SEQUENCE [LARGE SCALE GENOMIC DNA]</scope>
    <source>
        <strain>HS</strain>
    </source>
</reference>
<evidence type="ECO:0000255" key="1">
    <source>
        <dbReference type="HAMAP-Rule" id="MF_00214"/>
    </source>
</evidence>
<name>AROD_ECOHS</name>
<comment type="function">
    <text evidence="1">Involved in the third step of the chorismate pathway, which leads to the biosynthesis of aromatic amino acids. Catalyzes the cis-dehydration of 3-dehydroquinate (DHQ) and introduces the first double bond of the aromatic ring to yield 3-dehydroshikimate.</text>
</comment>
<comment type="catalytic activity">
    <reaction evidence="1">
        <text>3-dehydroquinate = 3-dehydroshikimate + H2O</text>
        <dbReference type="Rhea" id="RHEA:21096"/>
        <dbReference type="ChEBI" id="CHEBI:15377"/>
        <dbReference type="ChEBI" id="CHEBI:16630"/>
        <dbReference type="ChEBI" id="CHEBI:32364"/>
        <dbReference type="EC" id="4.2.1.10"/>
    </reaction>
</comment>
<comment type="pathway">
    <text evidence="1">Metabolic intermediate biosynthesis; chorismate biosynthesis; chorismate from D-erythrose 4-phosphate and phosphoenolpyruvate: step 3/7.</text>
</comment>
<comment type="subunit">
    <text evidence="1">Homodimer.</text>
</comment>
<comment type="similarity">
    <text evidence="1">Belongs to the type-I 3-dehydroquinase family.</text>
</comment>
<sequence>MKTVTVKDLVIGAGAPKIIVSLMAKDIARVKSEALAYREADFDILEWRVDHFADLSNVESVMAAAKILRETMPEKPLLFTFRSAKEGGEQAISTEAYIALNRAAIDSGLVDMIDLELFTGDDQVKETVAYAHAHDVKVVMSNHDFHKTPEAEEIIARLRKMQSFDADIPKIALMPQSTSDVLTLLAATLEMQEQYADRPIITMSMAKTGVISRLAGEVFGSAATFGAVKKASAPGQISVTDLRTVLTILHQA</sequence>
<feature type="chain" id="PRO_1000058630" description="3-dehydroquinate dehydratase">
    <location>
        <begin position="1"/>
        <end position="252"/>
    </location>
</feature>
<feature type="active site" description="Proton donor/acceptor" evidence="1">
    <location>
        <position position="143"/>
    </location>
</feature>
<feature type="active site" description="Schiff-base intermediate with substrate" evidence="1">
    <location>
        <position position="170"/>
    </location>
</feature>
<feature type="binding site" evidence="1">
    <location>
        <position position="21"/>
    </location>
    <ligand>
        <name>3-dehydroquinate</name>
        <dbReference type="ChEBI" id="CHEBI:32364"/>
    </ligand>
</feature>
<feature type="binding site" evidence="1">
    <location>
        <begin position="46"/>
        <end position="48"/>
    </location>
    <ligand>
        <name>3-dehydroquinate</name>
        <dbReference type="ChEBI" id="CHEBI:32364"/>
    </ligand>
</feature>
<feature type="binding site" evidence="1">
    <location>
        <position position="82"/>
    </location>
    <ligand>
        <name>3-dehydroquinate</name>
        <dbReference type="ChEBI" id="CHEBI:32364"/>
    </ligand>
</feature>
<feature type="binding site" evidence="1">
    <location>
        <position position="213"/>
    </location>
    <ligand>
        <name>3-dehydroquinate</name>
        <dbReference type="ChEBI" id="CHEBI:32364"/>
    </ligand>
</feature>
<feature type="binding site" evidence="1">
    <location>
        <position position="232"/>
    </location>
    <ligand>
        <name>3-dehydroquinate</name>
        <dbReference type="ChEBI" id="CHEBI:32364"/>
    </ligand>
</feature>
<feature type="binding site" evidence="1">
    <location>
        <position position="236"/>
    </location>
    <ligand>
        <name>3-dehydroquinate</name>
        <dbReference type="ChEBI" id="CHEBI:32364"/>
    </ligand>
</feature>
<accession>A8A0N9</accession>
<keyword id="KW-0028">Amino-acid biosynthesis</keyword>
<keyword id="KW-0057">Aromatic amino acid biosynthesis</keyword>
<keyword id="KW-0456">Lyase</keyword>
<keyword id="KW-0704">Schiff base</keyword>
<dbReference type="EC" id="4.2.1.10" evidence="1"/>
<dbReference type="EMBL" id="CP000802">
    <property type="protein sequence ID" value="ABV06093.1"/>
    <property type="molecule type" value="Genomic_DNA"/>
</dbReference>
<dbReference type="RefSeq" id="WP_000860163.1">
    <property type="nucleotide sequence ID" value="NC_009800.1"/>
</dbReference>
<dbReference type="SMR" id="A8A0N9"/>
<dbReference type="KEGG" id="ecx:EcHS_A1774"/>
<dbReference type="HOGENOM" id="CLU_064444_0_0_6"/>
<dbReference type="UniPathway" id="UPA00053">
    <property type="reaction ID" value="UER00086"/>
</dbReference>
<dbReference type="GO" id="GO:0003855">
    <property type="term" value="F:3-dehydroquinate dehydratase activity"/>
    <property type="evidence" value="ECO:0007669"/>
    <property type="project" value="UniProtKB-UniRule"/>
</dbReference>
<dbReference type="GO" id="GO:0046279">
    <property type="term" value="P:3,4-dihydroxybenzoate biosynthetic process"/>
    <property type="evidence" value="ECO:0007669"/>
    <property type="project" value="TreeGrafter"/>
</dbReference>
<dbReference type="GO" id="GO:0008652">
    <property type="term" value="P:amino acid biosynthetic process"/>
    <property type="evidence" value="ECO:0007669"/>
    <property type="project" value="UniProtKB-KW"/>
</dbReference>
<dbReference type="GO" id="GO:0009073">
    <property type="term" value="P:aromatic amino acid family biosynthetic process"/>
    <property type="evidence" value="ECO:0007669"/>
    <property type="project" value="UniProtKB-KW"/>
</dbReference>
<dbReference type="GO" id="GO:0009423">
    <property type="term" value="P:chorismate biosynthetic process"/>
    <property type="evidence" value="ECO:0007669"/>
    <property type="project" value="UniProtKB-UniRule"/>
</dbReference>
<dbReference type="CDD" id="cd00502">
    <property type="entry name" value="DHQase_I"/>
    <property type="match status" value="1"/>
</dbReference>
<dbReference type="FunFam" id="3.20.20.70:FF:000047">
    <property type="entry name" value="3-dehydroquinate dehydratase"/>
    <property type="match status" value="1"/>
</dbReference>
<dbReference type="Gene3D" id="3.20.20.70">
    <property type="entry name" value="Aldolase class I"/>
    <property type="match status" value="1"/>
</dbReference>
<dbReference type="HAMAP" id="MF_00214">
    <property type="entry name" value="AroD"/>
    <property type="match status" value="1"/>
</dbReference>
<dbReference type="InterPro" id="IPR018508">
    <property type="entry name" value="3-dehydroquinate_DH_AS"/>
</dbReference>
<dbReference type="InterPro" id="IPR013785">
    <property type="entry name" value="Aldolase_TIM"/>
</dbReference>
<dbReference type="InterPro" id="IPR001381">
    <property type="entry name" value="DHquinase_I"/>
</dbReference>
<dbReference type="InterPro" id="IPR050146">
    <property type="entry name" value="Type-I_3-dehydroquinase"/>
</dbReference>
<dbReference type="NCBIfam" id="TIGR01093">
    <property type="entry name" value="aroD"/>
    <property type="match status" value="1"/>
</dbReference>
<dbReference type="PANTHER" id="PTHR43699">
    <property type="entry name" value="3-DEHYDROQUINATE DEHYDRATASE"/>
    <property type="match status" value="1"/>
</dbReference>
<dbReference type="PANTHER" id="PTHR43699:SF1">
    <property type="entry name" value="3-DEHYDROQUINATE DEHYDRATASE"/>
    <property type="match status" value="1"/>
</dbReference>
<dbReference type="Pfam" id="PF01487">
    <property type="entry name" value="DHquinase_I"/>
    <property type="match status" value="1"/>
</dbReference>
<dbReference type="SUPFAM" id="SSF51569">
    <property type="entry name" value="Aldolase"/>
    <property type="match status" value="1"/>
</dbReference>
<dbReference type="PROSITE" id="PS01028">
    <property type="entry name" value="DEHYDROQUINASE_I"/>
    <property type="match status" value="1"/>
</dbReference>
<proteinExistence type="inferred from homology"/>